<protein>
    <recommendedName>
        <fullName evidence="1">Autonomous glycyl radical cofactor</fullName>
    </recommendedName>
</protein>
<proteinExistence type="inferred from homology"/>
<sequence length="127" mass="14284">MITGIQITKAANDDLLNSFWLLDSEKGEARCIVAKAGYAEDEVVAVSKLGDIEYREVPVEVKPEVRVEGGQHLNVNVLRRETLEDAVKHPEKYPQLTIRVSGYAVRFNSLTPEQQRDVIARTFTESL</sequence>
<feature type="chain" id="PRO_1000133987" description="Autonomous glycyl radical cofactor">
    <location>
        <begin position="1"/>
        <end position="127"/>
    </location>
</feature>
<feature type="domain" description="Glycine radical" evidence="1">
    <location>
        <begin position="5"/>
        <end position="127"/>
    </location>
</feature>
<feature type="modified residue" description="N6-acetyllysine" evidence="1">
    <location>
        <position position="48"/>
    </location>
</feature>
<feature type="modified residue" description="N6-acetyllysine" evidence="1">
    <location>
        <position position="88"/>
    </location>
</feature>
<feature type="modified residue" description="N6-acetyllysine" evidence="1">
    <location>
        <position position="92"/>
    </location>
</feature>
<feature type="modified residue" description="Glycine radical" evidence="1">
    <location>
        <position position="102"/>
    </location>
</feature>
<evidence type="ECO:0000255" key="1">
    <source>
        <dbReference type="HAMAP-Rule" id="MF_00806"/>
    </source>
</evidence>
<keyword id="KW-0007">Acetylation</keyword>
<keyword id="KW-0556">Organic radical</keyword>
<name>GRCA_ECOSE</name>
<organism>
    <name type="scientific">Escherichia coli (strain SE11)</name>
    <dbReference type="NCBI Taxonomy" id="409438"/>
    <lineage>
        <taxon>Bacteria</taxon>
        <taxon>Pseudomonadati</taxon>
        <taxon>Pseudomonadota</taxon>
        <taxon>Gammaproteobacteria</taxon>
        <taxon>Enterobacterales</taxon>
        <taxon>Enterobacteriaceae</taxon>
        <taxon>Escherichia</taxon>
    </lineage>
</organism>
<comment type="function">
    <text evidence="1">Acts as a radical domain for damaged PFL and possibly other radical proteins.</text>
</comment>
<gene>
    <name evidence="1" type="primary">grcA</name>
    <name type="ordered locus">ECSE_2868</name>
</gene>
<dbReference type="EMBL" id="AP009240">
    <property type="protein sequence ID" value="BAG78392.1"/>
    <property type="molecule type" value="Genomic_DNA"/>
</dbReference>
<dbReference type="RefSeq" id="WP_000627807.1">
    <property type="nucleotide sequence ID" value="NC_011415.1"/>
</dbReference>
<dbReference type="SMR" id="B6I5F4"/>
<dbReference type="GeneID" id="93774507"/>
<dbReference type="KEGG" id="ecy:ECSE_2868"/>
<dbReference type="HOGENOM" id="CLU_133780_0_0_6"/>
<dbReference type="Proteomes" id="UP000008199">
    <property type="component" value="Chromosome"/>
</dbReference>
<dbReference type="GO" id="GO:0005829">
    <property type="term" value="C:cytosol"/>
    <property type="evidence" value="ECO:0007669"/>
    <property type="project" value="TreeGrafter"/>
</dbReference>
<dbReference type="GO" id="GO:0008861">
    <property type="term" value="F:formate C-acetyltransferase activity"/>
    <property type="evidence" value="ECO:0007669"/>
    <property type="project" value="TreeGrafter"/>
</dbReference>
<dbReference type="FunFam" id="3.20.70.20:FF:000002">
    <property type="entry name" value="Autonomous glycyl radical cofactor"/>
    <property type="match status" value="1"/>
</dbReference>
<dbReference type="Gene3D" id="3.20.70.20">
    <property type="match status" value="1"/>
</dbReference>
<dbReference type="HAMAP" id="MF_00806">
    <property type="entry name" value="GrcA"/>
    <property type="match status" value="1"/>
</dbReference>
<dbReference type="InterPro" id="IPR050244">
    <property type="entry name" value="Auton_GlycylRad_Cofactor"/>
</dbReference>
<dbReference type="InterPro" id="IPR019777">
    <property type="entry name" value="Form_AcTrfase_GR_CS"/>
</dbReference>
<dbReference type="InterPro" id="IPR001150">
    <property type="entry name" value="Gly_radical"/>
</dbReference>
<dbReference type="InterPro" id="IPR011140">
    <property type="entry name" value="Glycyl_radical_cofactor_GrcA"/>
</dbReference>
<dbReference type="NCBIfam" id="TIGR04365">
    <property type="entry name" value="spare_glycyl"/>
    <property type="match status" value="1"/>
</dbReference>
<dbReference type="PANTHER" id="PTHR30191">
    <property type="entry name" value="FORMATE ACETYLTRANSFERASE"/>
    <property type="match status" value="1"/>
</dbReference>
<dbReference type="PANTHER" id="PTHR30191:SF0">
    <property type="entry name" value="FORMATE ACETYLTRANSFERASE 1"/>
    <property type="match status" value="1"/>
</dbReference>
<dbReference type="Pfam" id="PF01228">
    <property type="entry name" value="Gly_radical"/>
    <property type="match status" value="1"/>
</dbReference>
<dbReference type="PIRSF" id="PIRSF000378">
    <property type="entry name" value="Gly_radicl_yfiD"/>
    <property type="match status" value="1"/>
</dbReference>
<dbReference type="SUPFAM" id="SSF51998">
    <property type="entry name" value="PFL-like glycyl radical enzymes"/>
    <property type="match status" value="1"/>
</dbReference>
<dbReference type="PROSITE" id="PS00850">
    <property type="entry name" value="GLY_RADICAL_1"/>
    <property type="match status" value="1"/>
</dbReference>
<dbReference type="PROSITE" id="PS51149">
    <property type="entry name" value="GLY_RADICAL_2"/>
    <property type="match status" value="1"/>
</dbReference>
<reference key="1">
    <citation type="journal article" date="2008" name="DNA Res.">
        <title>Complete genome sequence and comparative analysis of the wild-type commensal Escherichia coli strain SE11 isolated from a healthy adult.</title>
        <authorList>
            <person name="Oshima K."/>
            <person name="Toh H."/>
            <person name="Ogura Y."/>
            <person name="Sasamoto H."/>
            <person name="Morita H."/>
            <person name="Park S.-H."/>
            <person name="Ooka T."/>
            <person name="Iyoda S."/>
            <person name="Taylor T.D."/>
            <person name="Hayashi T."/>
            <person name="Itoh K."/>
            <person name="Hattori M."/>
        </authorList>
    </citation>
    <scope>NUCLEOTIDE SEQUENCE [LARGE SCALE GENOMIC DNA]</scope>
    <source>
        <strain>SE11</strain>
    </source>
</reference>
<accession>B6I5F4</accession>